<keyword id="KW-0326">Glycosidase</keyword>
<keyword id="KW-0378">Hydrolase</keyword>
<keyword id="KW-0546">Nucleotide metabolism</keyword>
<reference key="1">
    <citation type="journal article" date="2002" name="J. Mol. Microbiol. Biotechnol.">
        <title>The genome of Methanosarcina mazei: evidence for lateral gene transfer between Bacteria and Archaea.</title>
        <authorList>
            <person name="Deppenmeier U."/>
            <person name="Johann A."/>
            <person name="Hartsch T."/>
            <person name="Merkl R."/>
            <person name="Schmitz R.A."/>
            <person name="Martinez-Arias R."/>
            <person name="Henne A."/>
            <person name="Wiezer A."/>
            <person name="Baeumer S."/>
            <person name="Jacobi C."/>
            <person name="Brueggemann H."/>
            <person name="Lienard T."/>
            <person name="Christmann A."/>
            <person name="Boemecke M."/>
            <person name="Steckel S."/>
            <person name="Bhattacharyya A."/>
            <person name="Lykidis A."/>
            <person name="Overbeek R."/>
            <person name="Klenk H.-P."/>
            <person name="Gunsalus R.P."/>
            <person name="Fritz H.-J."/>
            <person name="Gottschalk G."/>
        </authorList>
    </citation>
    <scope>NUCLEOTIDE SEQUENCE [LARGE SCALE GENOMIC DNA]</scope>
    <source>
        <strain>ATCC BAA-159 / DSM 3647 / Goe1 / Go1 / JCM 11833 / OCM 88</strain>
    </source>
</reference>
<organism>
    <name type="scientific">Methanosarcina mazei (strain ATCC BAA-159 / DSM 3647 / Goe1 / Go1 / JCM 11833 / OCM 88)</name>
    <name type="common">Methanosarcina frisia</name>
    <dbReference type="NCBI Taxonomy" id="192952"/>
    <lineage>
        <taxon>Archaea</taxon>
        <taxon>Methanobacteriati</taxon>
        <taxon>Methanobacteriota</taxon>
        <taxon>Stenosarchaea group</taxon>
        <taxon>Methanomicrobia</taxon>
        <taxon>Methanosarcinales</taxon>
        <taxon>Methanosarcinaceae</taxon>
        <taxon>Methanosarcina</taxon>
    </lineage>
</organism>
<dbReference type="EC" id="3.2.2.-" evidence="2"/>
<dbReference type="EMBL" id="AE008384">
    <property type="protein sequence ID" value="AAM31395.1"/>
    <property type="molecule type" value="Genomic_DNA"/>
</dbReference>
<dbReference type="SMR" id="Q8PW97"/>
<dbReference type="KEGG" id="mma:MM_1699"/>
<dbReference type="PATRIC" id="fig|192952.21.peg.1973"/>
<dbReference type="eggNOG" id="arCOG02435">
    <property type="taxonomic scope" value="Archaea"/>
</dbReference>
<dbReference type="HOGENOM" id="CLU_100069_1_0_2"/>
<dbReference type="Proteomes" id="UP000000595">
    <property type="component" value="Chromosome"/>
</dbReference>
<dbReference type="GO" id="GO:0070694">
    <property type="term" value="F:5-hydroxymethyl-dUMP N-hydrolase activity"/>
    <property type="evidence" value="ECO:0000250"/>
    <property type="project" value="UniProtKB"/>
</dbReference>
<dbReference type="GO" id="GO:0009159">
    <property type="term" value="P:deoxyribonucleoside monophosphate catabolic process"/>
    <property type="evidence" value="ECO:0000250"/>
    <property type="project" value="UniProtKB"/>
</dbReference>
<dbReference type="GO" id="GO:0009116">
    <property type="term" value="P:nucleoside metabolic process"/>
    <property type="evidence" value="ECO:0007669"/>
    <property type="project" value="UniProtKB-UniRule"/>
</dbReference>
<dbReference type="GO" id="GO:0009117">
    <property type="term" value="P:nucleotide metabolic process"/>
    <property type="evidence" value="ECO:0007669"/>
    <property type="project" value="UniProtKB-KW"/>
</dbReference>
<dbReference type="FunFam" id="3.40.50.450:FF:000019">
    <property type="entry name" value="2'-deoxynucleoside 5'-phosphate N-hydrolase 1"/>
    <property type="match status" value="1"/>
</dbReference>
<dbReference type="Gene3D" id="3.40.50.450">
    <property type="match status" value="1"/>
</dbReference>
<dbReference type="HAMAP" id="MF_03036">
    <property type="entry name" value="Nuc_phosphate_hydrolase"/>
    <property type="match status" value="1"/>
</dbReference>
<dbReference type="InterPro" id="IPR051239">
    <property type="entry name" value="2'-dNMP_N-hydrolase"/>
</dbReference>
<dbReference type="InterPro" id="IPR028607">
    <property type="entry name" value="DNPH1"/>
</dbReference>
<dbReference type="InterPro" id="IPR007710">
    <property type="entry name" value="Nucleoside_deoxyribTrfase"/>
</dbReference>
<dbReference type="PANTHER" id="PTHR15364">
    <property type="entry name" value="2'-DEOXYNUCLEOSIDE 5'-PHOSPHATE N-HYDROLASE 1"/>
    <property type="match status" value="1"/>
</dbReference>
<dbReference type="PANTHER" id="PTHR15364:SF0">
    <property type="entry name" value="2'-DEOXYNUCLEOSIDE 5'-PHOSPHATE N-HYDROLASE 1"/>
    <property type="match status" value="1"/>
</dbReference>
<dbReference type="Pfam" id="PF05014">
    <property type="entry name" value="Nuc_deoxyrib_tr"/>
    <property type="match status" value="1"/>
</dbReference>
<dbReference type="SUPFAM" id="SSF52309">
    <property type="entry name" value="N-(deoxy)ribosyltransferase-like"/>
    <property type="match status" value="1"/>
</dbReference>
<protein>
    <recommendedName>
        <fullName evidence="2">Putative 2'-deoxynucleoside 5'-phosphate N-hydrolase 1</fullName>
        <ecNumber evidence="2">3.2.2.-</ecNumber>
    </recommendedName>
</protein>
<gene>
    <name type="ordered locus">MM_1699</name>
</gene>
<evidence type="ECO:0000250" key="1">
    <source>
        <dbReference type="UniProtKB" id="O35820"/>
    </source>
</evidence>
<evidence type="ECO:0000255" key="2">
    <source>
        <dbReference type="HAMAP-Rule" id="MF_03036"/>
    </source>
</evidence>
<sequence length="161" mass="18044">MYSKESCERCEEMEKIIPSGQGKKSIFLSGSIRGGRQLLETYRFIYDALEEAGAEVLSWHVADPELEKTESKMTEQEIYARDLGLLEKSDALIAEVTVPSTGVGYEICRALVRKIPVLCLHMPDVAVSSMVLGNPDTLMEVRSYPDKEALKEIIIDFIRAL</sequence>
<accession>Q8PW97</accession>
<name>DNPH1_METMA</name>
<feature type="chain" id="PRO_0000379466" description="Putative 2'-deoxynucleoside 5'-phosphate N-hydrolase 1">
    <location>
        <begin position="1"/>
        <end position="161"/>
    </location>
</feature>
<feature type="binding site" description="in other chain" evidence="2">
    <location>
        <begin position="27"/>
        <end position="33"/>
    </location>
    <ligand>
        <name>substrate</name>
        <note>ligand shared between homodimeric partners</note>
    </ligand>
</feature>
<feature type="binding site" description="in other chain" evidence="2">
    <location>
        <position position="42"/>
    </location>
    <ligand>
        <name>substrate</name>
        <note>ligand shared between homodimeric partners</note>
    </ligand>
</feature>
<feature type="binding site" description="in other chain" evidence="1">
    <location>
        <position position="60"/>
    </location>
    <ligand>
        <name>substrate</name>
        <note>ligand shared between homodimeric partners</note>
    </ligand>
</feature>
<feature type="binding site" description="in other chain" evidence="2">
    <location>
        <position position="106"/>
    </location>
    <ligand>
        <name>substrate</name>
        <note>ligand shared between homodimeric partners</note>
    </ligand>
</feature>
<feature type="binding site" evidence="2">
    <location>
        <begin position="128"/>
        <end position="130"/>
    </location>
    <ligand>
        <name>substrate</name>
        <note>ligand shared between homodimeric partners</note>
    </ligand>
</feature>
<comment type="function">
    <text evidence="2">Catalyzes the cleavage of the N-glycosidic bond of deoxyribonucleoside 5'-monophosphates to yield deoxyribose 5-phosphate and a purine or pyrimidine base.</text>
</comment>
<comment type="catalytic activity">
    <reaction evidence="2">
        <text>a pyrimidine 2'-deoxyribonucleoside 5'-phosphate + H2O = a pyrimidine nucleobase + 2-deoxy-D-ribose 5-phosphate</text>
        <dbReference type="Rhea" id="RHEA:57852"/>
        <dbReference type="ChEBI" id="CHEBI:15377"/>
        <dbReference type="ChEBI" id="CHEBI:26432"/>
        <dbReference type="ChEBI" id="CHEBI:62877"/>
        <dbReference type="ChEBI" id="CHEBI:142209"/>
    </reaction>
</comment>
<comment type="catalytic activity">
    <reaction evidence="2">
        <text>a purine 2'-deoxyribonucleoside 5'-phosphate + H2O = a purine nucleobase + 2-deoxy-D-ribose 5-phosphate</text>
        <dbReference type="Rhea" id="RHEA:51132"/>
        <dbReference type="ChEBI" id="CHEBI:15377"/>
        <dbReference type="ChEBI" id="CHEBI:26386"/>
        <dbReference type="ChEBI" id="CHEBI:62877"/>
        <dbReference type="ChEBI" id="CHEBI:142198"/>
    </reaction>
</comment>
<comment type="subunit">
    <text evidence="2">Monomer and homodimer.</text>
</comment>
<comment type="similarity">
    <text evidence="2">Belongs to the 2'-deoxynucleoside 5'-phosphate N-hydrolase 1 family.</text>
</comment>
<proteinExistence type="inferred from homology"/>